<evidence type="ECO:0000255" key="1">
    <source>
        <dbReference type="HAMAP-Rule" id="MF_01006"/>
    </source>
</evidence>
<keyword id="KW-0046">Antibiotic resistance</keyword>
<keyword id="KW-1003">Cell membrane</keyword>
<keyword id="KW-0133">Cell shape</keyword>
<keyword id="KW-0961">Cell wall biogenesis/degradation</keyword>
<keyword id="KW-0378">Hydrolase</keyword>
<keyword id="KW-0472">Membrane</keyword>
<keyword id="KW-0573">Peptidoglycan synthesis</keyword>
<keyword id="KW-0812">Transmembrane</keyword>
<keyword id="KW-1133">Transmembrane helix</keyword>
<organism>
    <name type="scientific">Streptococcus agalactiae serotype Ia (strain ATCC 27591 / A909 / CDC SS700)</name>
    <dbReference type="NCBI Taxonomy" id="205921"/>
    <lineage>
        <taxon>Bacteria</taxon>
        <taxon>Bacillati</taxon>
        <taxon>Bacillota</taxon>
        <taxon>Bacilli</taxon>
        <taxon>Lactobacillales</taxon>
        <taxon>Streptococcaceae</taxon>
        <taxon>Streptococcus</taxon>
    </lineage>
</organism>
<proteinExistence type="inferred from homology"/>
<comment type="function">
    <text evidence="1">Catalyzes the dephosphorylation of undecaprenyl diphosphate (UPP). Confers resistance to bacitracin.</text>
</comment>
<comment type="catalytic activity">
    <reaction evidence="1">
        <text>di-trans,octa-cis-undecaprenyl diphosphate + H2O = di-trans,octa-cis-undecaprenyl phosphate + phosphate + H(+)</text>
        <dbReference type="Rhea" id="RHEA:28094"/>
        <dbReference type="ChEBI" id="CHEBI:15377"/>
        <dbReference type="ChEBI" id="CHEBI:15378"/>
        <dbReference type="ChEBI" id="CHEBI:43474"/>
        <dbReference type="ChEBI" id="CHEBI:58405"/>
        <dbReference type="ChEBI" id="CHEBI:60392"/>
        <dbReference type="EC" id="3.6.1.27"/>
    </reaction>
</comment>
<comment type="subcellular location">
    <subcellularLocation>
        <location evidence="1">Cell membrane</location>
        <topology evidence="1">Multi-pass membrane protein</topology>
    </subcellularLocation>
</comment>
<comment type="miscellaneous">
    <text>Bacitracin is thought to be involved in the inhibition of peptidoglycan synthesis by sequestering undecaprenyl diphosphate, thereby reducing the pool of lipid carrier available.</text>
</comment>
<comment type="similarity">
    <text evidence="1">Belongs to the UppP family.</text>
</comment>
<accession>Q3K3N4</accession>
<feature type="chain" id="PRO_0000227642" description="Undecaprenyl-diphosphatase">
    <location>
        <begin position="1"/>
        <end position="279"/>
    </location>
</feature>
<feature type="transmembrane region" description="Helical" evidence="1">
    <location>
        <begin position="45"/>
        <end position="65"/>
    </location>
</feature>
<feature type="transmembrane region" description="Helical" evidence="1">
    <location>
        <begin position="85"/>
        <end position="105"/>
    </location>
</feature>
<feature type="transmembrane region" description="Helical" evidence="1">
    <location>
        <begin position="113"/>
        <end position="133"/>
    </location>
</feature>
<feature type="transmembrane region" description="Helical" evidence="1">
    <location>
        <begin position="188"/>
        <end position="208"/>
    </location>
</feature>
<feature type="transmembrane region" description="Helical" evidence="1">
    <location>
        <begin position="226"/>
        <end position="246"/>
    </location>
</feature>
<feature type="transmembrane region" description="Helical" evidence="1">
    <location>
        <begin position="255"/>
        <end position="275"/>
    </location>
</feature>
<sequence>MLIIELLKALFLGVVEGVTEWLPVSSTGHLILVQEFMKLNQSKSFVEMFNIVIQLGAIMAVIVIYFKRLNPFQPGKSAREIRLTWQLWLKVVIACIPSILIALPFDNWFEAHFNFMIPIAIALIFYGFVFIWVEKRNAHLKPQVTELASMSYKTAFLIGCFQVLSIVPGTSRSGATILGAIIIGTSRSVAADFTFFLAIPTMFGYSGLKAVKYFLDGNVLSLDQSLILLVASLIAFVVSLYVIRFLTDYVKRHDFTIFGKYRIVLGSLLILYWLVVHLF</sequence>
<reference key="1">
    <citation type="journal article" date="2005" name="Proc. Natl. Acad. Sci. U.S.A.">
        <title>Genome analysis of multiple pathogenic isolates of Streptococcus agalactiae: implications for the microbial 'pan-genome'.</title>
        <authorList>
            <person name="Tettelin H."/>
            <person name="Masignani V."/>
            <person name="Cieslewicz M.J."/>
            <person name="Donati C."/>
            <person name="Medini D."/>
            <person name="Ward N.L."/>
            <person name="Angiuoli S.V."/>
            <person name="Crabtree J."/>
            <person name="Jones A.L."/>
            <person name="Durkin A.S."/>
            <person name="DeBoy R.T."/>
            <person name="Davidsen T.M."/>
            <person name="Mora M."/>
            <person name="Scarselli M."/>
            <person name="Margarit y Ros I."/>
            <person name="Peterson J.D."/>
            <person name="Hauser C.R."/>
            <person name="Sundaram J.P."/>
            <person name="Nelson W.C."/>
            <person name="Madupu R."/>
            <person name="Brinkac L.M."/>
            <person name="Dodson R.J."/>
            <person name="Rosovitz M.J."/>
            <person name="Sullivan S.A."/>
            <person name="Daugherty S.C."/>
            <person name="Haft D.H."/>
            <person name="Selengut J."/>
            <person name="Gwinn M.L."/>
            <person name="Zhou L."/>
            <person name="Zafar N."/>
            <person name="Khouri H."/>
            <person name="Radune D."/>
            <person name="Dimitrov G."/>
            <person name="Watkins K."/>
            <person name="O'Connor K.J."/>
            <person name="Smith S."/>
            <person name="Utterback T.R."/>
            <person name="White O."/>
            <person name="Rubens C.E."/>
            <person name="Grandi G."/>
            <person name="Madoff L.C."/>
            <person name="Kasper D.L."/>
            <person name="Telford J.L."/>
            <person name="Wessels M.R."/>
            <person name="Rappuoli R."/>
            <person name="Fraser C.M."/>
        </authorList>
    </citation>
    <scope>NUCLEOTIDE SEQUENCE [LARGE SCALE GENOMIC DNA]</scope>
    <source>
        <strain>ATCC 27591 / A909 / CDC SS700</strain>
    </source>
</reference>
<name>UPPP_STRA1</name>
<protein>
    <recommendedName>
        <fullName evidence="1">Undecaprenyl-diphosphatase</fullName>
        <ecNumber evidence="1">3.6.1.27</ecNumber>
    </recommendedName>
    <alternativeName>
        <fullName evidence="1">Bacitracin resistance protein</fullName>
    </alternativeName>
    <alternativeName>
        <fullName evidence="1">Undecaprenyl pyrophosphate phosphatase</fullName>
    </alternativeName>
</protein>
<gene>
    <name evidence="1" type="primary">uppP</name>
    <name type="ordered locus">SAK_0196</name>
</gene>
<dbReference type="EC" id="3.6.1.27" evidence="1"/>
<dbReference type="EMBL" id="CP000114">
    <property type="protein sequence ID" value="ABA46299.1"/>
    <property type="molecule type" value="Genomic_DNA"/>
</dbReference>
<dbReference type="RefSeq" id="WP_000905325.1">
    <property type="nucleotide sequence ID" value="NC_007432.1"/>
</dbReference>
<dbReference type="SMR" id="Q3K3N4"/>
<dbReference type="KEGG" id="sak:SAK_0196"/>
<dbReference type="HOGENOM" id="CLU_060296_2_0_9"/>
<dbReference type="GO" id="GO:0005886">
    <property type="term" value="C:plasma membrane"/>
    <property type="evidence" value="ECO:0007669"/>
    <property type="project" value="UniProtKB-SubCell"/>
</dbReference>
<dbReference type="GO" id="GO:0050380">
    <property type="term" value="F:undecaprenyl-diphosphatase activity"/>
    <property type="evidence" value="ECO:0007669"/>
    <property type="project" value="UniProtKB-UniRule"/>
</dbReference>
<dbReference type="GO" id="GO:0071555">
    <property type="term" value="P:cell wall organization"/>
    <property type="evidence" value="ECO:0007669"/>
    <property type="project" value="UniProtKB-KW"/>
</dbReference>
<dbReference type="GO" id="GO:0009252">
    <property type="term" value="P:peptidoglycan biosynthetic process"/>
    <property type="evidence" value="ECO:0007669"/>
    <property type="project" value="UniProtKB-KW"/>
</dbReference>
<dbReference type="GO" id="GO:0008360">
    <property type="term" value="P:regulation of cell shape"/>
    <property type="evidence" value="ECO:0007669"/>
    <property type="project" value="UniProtKB-KW"/>
</dbReference>
<dbReference type="GO" id="GO:0046677">
    <property type="term" value="P:response to antibiotic"/>
    <property type="evidence" value="ECO:0007669"/>
    <property type="project" value="UniProtKB-UniRule"/>
</dbReference>
<dbReference type="HAMAP" id="MF_01006">
    <property type="entry name" value="Undec_diphosphatase"/>
    <property type="match status" value="1"/>
</dbReference>
<dbReference type="InterPro" id="IPR003824">
    <property type="entry name" value="UppP"/>
</dbReference>
<dbReference type="NCBIfam" id="NF001391">
    <property type="entry name" value="PRK00281.1-5"/>
    <property type="match status" value="1"/>
</dbReference>
<dbReference type="PANTHER" id="PTHR30622">
    <property type="entry name" value="UNDECAPRENYL-DIPHOSPHATASE"/>
    <property type="match status" value="1"/>
</dbReference>
<dbReference type="PANTHER" id="PTHR30622:SF3">
    <property type="entry name" value="UNDECAPRENYL-DIPHOSPHATASE"/>
    <property type="match status" value="1"/>
</dbReference>
<dbReference type="Pfam" id="PF02673">
    <property type="entry name" value="BacA"/>
    <property type="match status" value="1"/>
</dbReference>